<gene>
    <name evidence="1" type="primary">ahcY</name>
    <name type="ordered locus">PMT_0138</name>
</gene>
<evidence type="ECO:0000255" key="1">
    <source>
        <dbReference type="HAMAP-Rule" id="MF_00563"/>
    </source>
</evidence>
<feature type="chain" id="PRO_0000116975" description="Adenosylhomocysteinase">
    <location>
        <begin position="1"/>
        <end position="476"/>
    </location>
</feature>
<feature type="binding site" evidence="1">
    <location>
        <position position="67"/>
    </location>
    <ligand>
        <name>substrate</name>
    </ligand>
</feature>
<feature type="binding site" evidence="1">
    <location>
        <position position="142"/>
    </location>
    <ligand>
        <name>substrate</name>
    </ligand>
</feature>
<feature type="binding site" evidence="1">
    <location>
        <position position="202"/>
    </location>
    <ligand>
        <name>substrate</name>
    </ligand>
</feature>
<feature type="binding site" evidence="1">
    <location>
        <begin position="203"/>
        <end position="205"/>
    </location>
    <ligand>
        <name>NAD(+)</name>
        <dbReference type="ChEBI" id="CHEBI:57540"/>
    </ligand>
</feature>
<feature type="binding site" evidence="1">
    <location>
        <position position="232"/>
    </location>
    <ligand>
        <name>substrate</name>
    </ligand>
</feature>
<feature type="binding site" evidence="1">
    <location>
        <position position="236"/>
    </location>
    <ligand>
        <name>substrate</name>
    </ligand>
</feature>
<feature type="binding site" evidence="1">
    <location>
        <position position="237"/>
    </location>
    <ligand>
        <name>NAD(+)</name>
        <dbReference type="ChEBI" id="CHEBI:57540"/>
    </ligand>
</feature>
<feature type="binding site" evidence="1">
    <location>
        <begin position="266"/>
        <end position="271"/>
    </location>
    <ligand>
        <name>NAD(+)</name>
        <dbReference type="ChEBI" id="CHEBI:57540"/>
    </ligand>
</feature>
<feature type="binding site" evidence="1">
    <location>
        <position position="289"/>
    </location>
    <ligand>
        <name>NAD(+)</name>
        <dbReference type="ChEBI" id="CHEBI:57540"/>
    </ligand>
</feature>
<feature type="binding site" evidence="1">
    <location>
        <position position="324"/>
    </location>
    <ligand>
        <name>NAD(+)</name>
        <dbReference type="ChEBI" id="CHEBI:57540"/>
    </ligand>
</feature>
<feature type="binding site" evidence="1">
    <location>
        <begin position="345"/>
        <end position="347"/>
    </location>
    <ligand>
        <name>NAD(+)</name>
        <dbReference type="ChEBI" id="CHEBI:57540"/>
    </ligand>
</feature>
<feature type="binding site" evidence="1">
    <location>
        <position position="390"/>
    </location>
    <ligand>
        <name>NAD(+)</name>
        <dbReference type="ChEBI" id="CHEBI:57540"/>
    </ligand>
</feature>
<name>SAHH_PROMM</name>
<proteinExistence type="inferred from homology"/>
<reference key="1">
    <citation type="journal article" date="2003" name="Nature">
        <title>Genome divergence in two Prochlorococcus ecotypes reflects oceanic niche differentiation.</title>
        <authorList>
            <person name="Rocap G."/>
            <person name="Larimer F.W."/>
            <person name="Lamerdin J.E."/>
            <person name="Malfatti S."/>
            <person name="Chain P."/>
            <person name="Ahlgren N.A."/>
            <person name="Arellano A."/>
            <person name="Coleman M."/>
            <person name="Hauser L."/>
            <person name="Hess W.R."/>
            <person name="Johnson Z.I."/>
            <person name="Land M.L."/>
            <person name="Lindell D."/>
            <person name="Post A.F."/>
            <person name="Regala W."/>
            <person name="Shah M."/>
            <person name="Shaw S.L."/>
            <person name="Steglich C."/>
            <person name="Sullivan M.B."/>
            <person name="Ting C.S."/>
            <person name="Tolonen A."/>
            <person name="Webb E.A."/>
            <person name="Zinser E.R."/>
            <person name="Chisholm S.W."/>
        </authorList>
    </citation>
    <scope>NUCLEOTIDE SEQUENCE [LARGE SCALE GENOMIC DNA]</scope>
    <source>
        <strain>MIT 9313</strain>
    </source>
</reference>
<protein>
    <recommendedName>
        <fullName evidence="1">Adenosylhomocysteinase</fullName>
        <ecNumber evidence="1">3.13.2.1</ecNumber>
    </recommendedName>
    <alternativeName>
        <fullName evidence="1">S-adenosyl-L-homocysteine hydrolase</fullName>
        <shortName evidence="1">AdoHcyase</shortName>
    </alternativeName>
</protein>
<comment type="function">
    <text evidence="1">May play a key role in the regulation of the intracellular concentration of adenosylhomocysteine.</text>
</comment>
<comment type="catalytic activity">
    <reaction evidence="1">
        <text>S-adenosyl-L-homocysteine + H2O = L-homocysteine + adenosine</text>
        <dbReference type="Rhea" id="RHEA:21708"/>
        <dbReference type="ChEBI" id="CHEBI:15377"/>
        <dbReference type="ChEBI" id="CHEBI:16335"/>
        <dbReference type="ChEBI" id="CHEBI:57856"/>
        <dbReference type="ChEBI" id="CHEBI:58199"/>
        <dbReference type="EC" id="3.13.2.1"/>
    </reaction>
</comment>
<comment type="cofactor">
    <cofactor evidence="1">
        <name>NAD(+)</name>
        <dbReference type="ChEBI" id="CHEBI:57540"/>
    </cofactor>
    <text evidence="1">Binds 1 NAD(+) per subunit.</text>
</comment>
<comment type="pathway">
    <text evidence="1">Amino-acid biosynthesis; L-homocysteine biosynthesis; L-homocysteine from S-adenosyl-L-homocysteine: step 1/1.</text>
</comment>
<comment type="subcellular location">
    <subcellularLocation>
        <location evidence="1">Cytoplasm</location>
    </subcellularLocation>
</comment>
<comment type="similarity">
    <text evidence="1">Belongs to the adenosylhomocysteinase family.</text>
</comment>
<organism>
    <name type="scientific">Prochlorococcus marinus (strain MIT 9313)</name>
    <dbReference type="NCBI Taxonomy" id="74547"/>
    <lineage>
        <taxon>Bacteria</taxon>
        <taxon>Bacillati</taxon>
        <taxon>Cyanobacteriota</taxon>
        <taxon>Cyanophyceae</taxon>
        <taxon>Synechococcales</taxon>
        <taxon>Prochlorococcaceae</taxon>
        <taxon>Prochlorococcus</taxon>
    </lineage>
</organism>
<accession>Q7V926</accession>
<sequence length="476" mass="51748">MVAVPTSTASLQALPQYVVADIDLADFGRKELSIAETEMPGLIALRIKYGSEKPLKGARIAGSLHMTIQTGVLIETLVALGADVRWASCNIFSTQDHAAAAIAASGVPVFATKGETLDEYWAYTHRILEWGDGGTPNMILDDGGDATGLVMLGSKAESDSSVLDNPGNEEETALFASIRTKLAEDSSFYSRIKSSIQGVTEETTTGVARLYQMQKSGELPFPAINVNDSVTKSKFDNLYGCRESLVDGIKRATDVMVAGKVALVMGYGDVGKGSAQSLRGLGATVMIAEIDPICALQAAMEGYRVVRLDEVVQDVDIFVTSTGNFQVIRHEHLIRMKDEAIVCNIGHFDNEIDVASLKDYPWENIKPQVDHITLPSGNKIILLAEGRLVNLGCATGHPSFVMSNSFTNQVLAQIELFSKGDQYADQVYVLPKHLDEMVARLHLEKIGARLTELTKQQADYISVPVEGPYKPDHYRY</sequence>
<keyword id="KW-0963">Cytoplasm</keyword>
<keyword id="KW-0378">Hydrolase</keyword>
<keyword id="KW-0520">NAD</keyword>
<keyword id="KW-0554">One-carbon metabolism</keyword>
<keyword id="KW-1185">Reference proteome</keyword>
<dbReference type="EC" id="3.13.2.1" evidence="1"/>
<dbReference type="EMBL" id="BX548175">
    <property type="protein sequence ID" value="CAE20313.1"/>
    <property type="molecule type" value="Genomic_DNA"/>
</dbReference>
<dbReference type="RefSeq" id="WP_011129517.1">
    <property type="nucleotide sequence ID" value="NC_005071.1"/>
</dbReference>
<dbReference type="SMR" id="Q7V926"/>
<dbReference type="KEGG" id="pmt:PMT_0138"/>
<dbReference type="eggNOG" id="COG0499">
    <property type="taxonomic scope" value="Bacteria"/>
</dbReference>
<dbReference type="HOGENOM" id="CLU_025194_2_1_3"/>
<dbReference type="OrthoDB" id="9802717at2"/>
<dbReference type="UniPathway" id="UPA00314">
    <property type="reaction ID" value="UER00076"/>
</dbReference>
<dbReference type="Proteomes" id="UP000001423">
    <property type="component" value="Chromosome"/>
</dbReference>
<dbReference type="GO" id="GO:0005829">
    <property type="term" value="C:cytosol"/>
    <property type="evidence" value="ECO:0007669"/>
    <property type="project" value="TreeGrafter"/>
</dbReference>
<dbReference type="GO" id="GO:0004013">
    <property type="term" value="F:adenosylhomocysteinase activity"/>
    <property type="evidence" value="ECO:0007669"/>
    <property type="project" value="UniProtKB-UniRule"/>
</dbReference>
<dbReference type="GO" id="GO:0071269">
    <property type="term" value="P:L-homocysteine biosynthetic process"/>
    <property type="evidence" value="ECO:0007669"/>
    <property type="project" value="UniProtKB-UniRule"/>
</dbReference>
<dbReference type="GO" id="GO:0006730">
    <property type="term" value="P:one-carbon metabolic process"/>
    <property type="evidence" value="ECO:0007669"/>
    <property type="project" value="UniProtKB-KW"/>
</dbReference>
<dbReference type="GO" id="GO:0033353">
    <property type="term" value="P:S-adenosylmethionine cycle"/>
    <property type="evidence" value="ECO:0007669"/>
    <property type="project" value="TreeGrafter"/>
</dbReference>
<dbReference type="CDD" id="cd00401">
    <property type="entry name" value="SAHH"/>
    <property type="match status" value="1"/>
</dbReference>
<dbReference type="FunFam" id="3.40.50.720:FF:000004">
    <property type="entry name" value="Adenosylhomocysteinase"/>
    <property type="match status" value="1"/>
</dbReference>
<dbReference type="Gene3D" id="3.40.50.1480">
    <property type="entry name" value="Adenosylhomocysteinase-like"/>
    <property type="match status" value="1"/>
</dbReference>
<dbReference type="Gene3D" id="3.40.50.720">
    <property type="entry name" value="NAD(P)-binding Rossmann-like Domain"/>
    <property type="match status" value="1"/>
</dbReference>
<dbReference type="HAMAP" id="MF_00563">
    <property type="entry name" value="AdoHcyase"/>
    <property type="match status" value="1"/>
</dbReference>
<dbReference type="InterPro" id="IPR042172">
    <property type="entry name" value="Adenosylhomocyst_ase-like_sf"/>
</dbReference>
<dbReference type="InterPro" id="IPR000043">
    <property type="entry name" value="Adenosylhomocysteinase-like"/>
</dbReference>
<dbReference type="InterPro" id="IPR015878">
    <property type="entry name" value="Ado_hCys_hydrolase_NAD-bd"/>
</dbReference>
<dbReference type="InterPro" id="IPR036291">
    <property type="entry name" value="NAD(P)-bd_dom_sf"/>
</dbReference>
<dbReference type="InterPro" id="IPR020082">
    <property type="entry name" value="S-Ado-L-homoCys_hydrolase_CS"/>
</dbReference>
<dbReference type="NCBIfam" id="TIGR00936">
    <property type="entry name" value="ahcY"/>
    <property type="match status" value="1"/>
</dbReference>
<dbReference type="NCBIfam" id="NF004005">
    <property type="entry name" value="PRK05476.2-3"/>
    <property type="match status" value="1"/>
</dbReference>
<dbReference type="PANTHER" id="PTHR23420">
    <property type="entry name" value="ADENOSYLHOMOCYSTEINASE"/>
    <property type="match status" value="1"/>
</dbReference>
<dbReference type="PANTHER" id="PTHR23420:SF0">
    <property type="entry name" value="ADENOSYLHOMOCYSTEINASE"/>
    <property type="match status" value="1"/>
</dbReference>
<dbReference type="Pfam" id="PF05221">
    <property type="entry name" value="AdoHcyase"/>
    <property type="match status" value="1"/>
</dbReference>
<dbReference type="Pfam" id="PF00670">
    <property type="entry name" value="AdoHcyase_NAD"/>
    <property type="match status" value="1"/>
</dbReference>
<dbReference type="PIRSF" id="PIRSF001109">
    <property type="entry name" value="Ad_hcy_hydrolase"/>
    <property type="match status" value="1"/>
</dbReference>
<dbReference type="SMART" id="SM00996">
    <property type="entry name" value="AdoHcyase"/>
    <property type="match status" value="1"/>
</dbReference>
<dbReference type="SMART" id="SM00997">
    <property type="entry name" value="AdoHcyase_NAD"/>
    <property type="match status" value="1"/>
</dbReference>
<dbReference type="SUPFAM" id="SSF52283">
    <property type="entry name" value="Formate/glycerate dehydrogenase catalytic domain-like"/>
    <property type="match status" value="1"/>
</dbReference>
<dbReference type="SUPFAM" id="SSF51735">
    <property type="entry name" value="NAD(P)-binding Rossmann-fold domains"/>
    <property type="match status" value="1"/>
</dbReference>
<dbReference type="PROSITE" id="PS00738">
    <property type="entry name" value="ADOHCYASE_1"/>
    <property type="match status" value="1"/>
</dbReference>
<dbReference type="PROSITE" id="PS00739">
    <property type="entry name" value="ADOHCYASE_2"/>
    <property type="match status" value="1"/>
</dbReference>